<feature type="chain" id="PRO_0000133553" description="Major capsid protein L1">
    <location>
        <begin position="1"/>
        <end position="503"/>
    </location>
</feature>
<feature type="region of interest" description="Disordered" evidence="2">
    <location>
        <begin position="476"/>
        <end position="503"/>
    </location>
</feature>
<feature type="compositionally biased region" description="Low complexity" evidence="2">
    <location>
        <begin position="484"/>
        <end position="495"/>
    </location>
</feature>
<feature type="disulfide bond" description="Interchain (with C-429)" evidence="1">
    <location>
        <position position="174"/>
    </location>
</feature>
<feature type="disulfide bond" description="Interchain (with C-174)" evidence="1">
    <location>
        <position position="429"/>
    </location>
</feature>
<comment type="function">
    <text evidence="1">Forms an icosahedral capsid with a T=7 symmetry and a 50 nm diameter. The capsid is composed of 72 pentamers linked to each other by disulfide bonds and associated with L2 proteins. Binds to heparan sulfate proteoglycans on cell surface of basal layer keratinocytes to provide initial virion attachment. This binding mediates a conformational change in the virus capsid that facilitates efficient infection. The virion enters the host cell via endocytosis. During virus trafficking, L1 protein dissociates from the viral DNA and the genomic DNA is released to the host nucleus. The virion assembly takes place within the cell nucleus. Encapsulates the genomic DNA together with protein L2.</text>
</comment>
<comment type="subunit">
    <text evidence="1">Self-assembles into homopentamers. The capsid has an icosahedral symmetry and consists of 72 capsomers, with each capsomer being a pentamer of L1. Interacts with the minor capsid protein L2; this interaction is necessary for viral genome encapsidation. Interacts with protein E2; this interaction enhances E2-dependent replication and transcription activation.</text>
</comment>
<comment type="subcellular location">
    <subcellularLocation>
        <location evidence="1">Virion</location>
    </subcellularLocation>
    <subcellularLocation>
        <location evidence="1">Host nucleus</location>
    </subcellularLocation>
</comment>
<comment type="similarity">
    <text evidence="1">Belongs to the papillomaviridae L1 protein family.</text>
</comment>
<dbReference type="EMBL" id="AB027021">
    <property type="protein sequence ID" value="BAA90742.1"/>
    <property type="molecule type" value="Genomic_DNA"/>
</dbReference>
<dbReference type="SMR" id="Q9IR52"/>
<dbReference type="Proteomes" id="UP000145193">
    <property type="component" value="Genome"/>
</dbReference>
<dbReference type="GO" id="GO:0042025">
    <property type="term" value="C:host cell nucleus"/>
    <property type="evidence" value="ECO:0007669"/>
    <property type="project" value="UniProtKB-SubCell"/>
</dbReference>
<dbReference type="GO" id="GO:0039620">
    <property type="term" value="C:T=7 icosahedral viral capsid"/>
    <property type="evidence" value="ECO:0007669"/>
    <property type="project" value="UniProtKB-UniRule"/>
</dbReference>
<dbReference type="GO" id="GO:0005198">
    <property type="term" value="F:structural molecule activity"/>
    <property type="evidence" value="ECO:0007669"/>
    <property type="project" value="UniProtKB-UniRule"/>
</dbReference>
<dbReference type="GO" id="GO:0075509">
    <property type="term" value="P:endocytosis involved in viral entry into host cell"/>
    <property type="evidence" value="ECO:0007669"/>
    <property type="project" value="UniProtKB-KW"/>
</dbReference>
<dbReference type="GO" id="GO:0019062">
    <property type="term" value="P:virion attachment to host cell"/>
    <property type="evidence" value="ECO:0007669"/>
    <property type="project" value="UniProtKB-UniRule"/>
</dbReference>
<dbReference type="Gene3D" id="2.60.175.20">
    <property type="entry name" value="Major capsid L1 (late) superfamily, Papillomavirus"/>
    <property type="match status" value="2"/>
</dbReference>
<dbReference type="HAMAP" id="MF_04002">
    <property type="entry name" value="PPV_L1"/>
    <property type="match status" value="1"/>
</dbReference>
<dbReference type="InterPro" id="IPR002210">
    <property type="entry name" value="Capsid_L1_Papillomavir"/>
</dbReference>
<dbReference type="InterPro" id="IPR036973">
    <property type="entry name" value="Capsid_L1_sf_Papillomavir"/>
</dbReference>
<dbReference type="InterPro" id="IPR011222">
    <property type="entry name" value="dsDNA_vir_gr_I_capsid"/>
</dbReference>
<dbReference type="Pfam" id="PF00500">
    <property type="entry name" value="Late_protein_L1"/>
    <property type="match status" value="1"/>
</dbReference>
<dbReference type="PRINTS" id="PR00865">
    <property type="entry name" value="HPVCAPSIDL1"/>
</dbReference>
<dbReference type="SUPFAM" id="SSF88648">
    <property type="entry name" value="Group I dsDNA viruses"/>
    <property type="match status" value="1"/>
</dbReference>
<sequence length="503" mass="56210">MALWRTNDSKVYLPPAPVSRIVNTEEYITRTGIYYYAGSSRLITLGHPYFSIPKTNTRAEIPKVSAFQYRVFRVQLPDPNKFGLPDPNLFNPDTDRLVWGCVGVEVGRGQPLGVGLSGHPLFNKYDDTENSRFANGNDQQDVRDNISVDNKQTQLCIIGCAPPIGEHWATGTTCKNVPVPQGDCPPLELVSTVIEDGDMVDTGFGAMDFANLQATKSDVPLDIAQSVCKYPDYLKMSADTYGNSMFFHLRREQIFARHYYNKAGVVGDAIPDKAYIKGTGAGRDPISSYIYSATPSGSMITSDSQIFNKPYWLHRAQGHNNGICWNNQLFITCVDTTKSTNLTISTAVTPSVAQTFTPANFKQYIRHGEEYELQFIFQLCKITLTTEIMAYLHTMDSTILEQWNFGLTLPPSASLEDAYRFVKNAATSCHKDSPPQAKEDPLAKYKFWNVDLKERFSLDLDQFALGRKFLLQIGAQRKPRPGLKRPAPSSSASSSAKRKRVKK</sequence>
<organismHost>
    <name type="scientific">Homo sapiens</name>
    <name type="common">Human</name>
    <dbReference type="NCBI Taxonomy" id="9606"/>
</organismHost>
<accession>Q9IR52</accession>
<organism>
    <name type="scientific">Human papillomavirus 82</name>
    <dbReference type="NCBI Taxonomy" id="129724"/>
    <lineage>
        <taxon>Viruses</taxon>
        <taxon>Monodnaviria</taxon>
        <taxon>Shotokuvirae</taxon>
        <taxon>Cossaviricota</taxon>
        <taxon>Papovaviricetes</taxon>
        <taxon>Zurhausenvirales</taxon>
        <taxon>Papillomaviridae</taxon>
        <taxon>Firstpapillomavirinae</taxon>
        <taxon>Alphapapillomavirus</taxon>
        <taxon>Alphapapillomavirus 5</taxon>
    </lineage>
</organism>
<proteinExistence type="inferred from homology"/>
<reference key="1">
    <citation type="journal article" date="2000" name="Clin. Diagn. Lab. Immunol.">
        <title>Molecular cloning and nucleotide sequence analysis of a novel human papillomavirus (type 82) associated with vaginal intraepithelial neoplasia.</title>
        <authorList>
            <person name="Kino N."/>
            <person name="Sata T."/>
            <person name="Sato Y."/>
            <person name="Sugase M."/>
            <person name="Matsukura T."/>
        </authorList>
    </citation>
    <scope>NUCLEOTIDE SEQUENCE [GENOMIC DNA]</scope>
</reference>
<gene>
    <name evidence="1" type="primary">L1</name>
</gene>
<evidence type="ECO:0000255" key="1">
    <source>
        <dbReference type="HAMAP-Rule" id="MF_04002"/>
    </source>
</evidence>
<evidence type="ECO:0000256" key="2">
    <source>
        <dbReference type="SAM" id="MobiDB-lite"/>
    </source>
</evidence>
<keyword id="KW-0167">Capsid protein</keyword>
<keyword id="KW-1015">Disulfide bond</keyword>
<keyword id="KW-1048">Host nucleus</keyword>
<keyword id="KW-0945">Host-virus interaction</keyword>
<keyword id="KW-0426">Late protein</keyword>
<keyword id="KW-1145">T=7 icosahedral capsid protein</keyword>
<keyword id="KW-1161">Viral attachment to host cell</keyword>
<keyword id="KW-1162">Viral penetration into host cytoplasm</keyword>
<keyword id="KW-0946">Virion</keyword>
<keyword id="KW-1164">Virus endocytosis by host</keyword>
<keyword id="KW-1160">Virus entry into host cell</keyword>
<protein>
    <recommendedName>
        <fullName evidence="1">Major capsid protein L1</fullName>
    </recommendedName>
</protein>
<name>VL1_HPV82</name>